<proteinExistence type="inferred from homology"/>
<sequence>MVKLIPRLSSRRNGRIRLRKNTRKISQGVIHIQASLQNTIVTVTDVRGRVVSWASAGSAGFKGTTRRTPFAAQTAATNAIRTAINHGMREADVLIKGPGLGRDAALRAIRRSGIRLELILDVTPMPHNGCRPPKKRRV</sequence>
<accession>A7M929</accession>
<reference key="1">
    <citation type="journal article" date="2007" name="BMC Plant Biol.">
        <title>Complete DNA sequences of the plastid genomes of two parasitic flowering plant species, Cuscuta reflexa and Cuscuta gronovii.</title>
        <authorList>
            <person name="Funk H.T."/>
            <person name="Berg S."/>
            <person name="Krupinska K."/>
            <person name="Maier U.-G."/>
            <person name="Krause K."/>
        </authorList>
    </citation>
    <scope>NUCLEOTIDE SEQUENCE [LARGE SCALE GENOMIC DNA]</scope>
</reference>
<comment type="subunit">
    <text evidence="1">Part of the 30S ribosomal subunit.</text>
</comment>
<comment type="subcellular location">
    <subcellularLocation>
        <location>Plastid</location>
    </subcellularLocation>
</comment>
<comment type="similarity">
    <text evidence="1">Belongs to the universal ribosomal protein uS11 family.</text>
</comment>
<comment type="caution">
    <text evidence="2">Young tissue from this organism is photosynthetic and contains some thylakoids, although the photosynthetic activity does not exceed the light compensation point.</text>
</comment>
<protein>
    <recommendedName>
        <fullName evidence="2">Small ribosomal subunit protein uS11c</fullName>
    </recommendedName>
    <alternativeName>
        <fullName>Plastid 30S ribosomal protein S11</fullName>
    </alternativeName>
</protein>
<geneLocation type="plastid"/>
<organism>
    <name type="scientific">Cuscuta gronovii</name>
    <name type="common">Common dodder</name>
    <name type="synonym">Epithymum gronovii</name>
    <dbReference type="NCBI Taxonomy" id="35886"/>
    <lineage>
        <taxon>Eukaryota</taxon>
        <taxon>Viridiplantae</taxon>
        <taxon>Streptophyta</taxon>
        <taxon>Embryophyta</taxon>
        <taxon>Tracheophyta</taxon>
        <taxon>Spermatophyta</taxon>
        <taxon>Magnoliopsida</taxon>
        <taxon>eudicotyledons</taxon>
        <taxon>Gunneridae</taxon>
        <taxon>Pentapetalae</taxon>
        <taxon>asterids</taxon>
        <taxon>lamiids</taxon>
        <taxon>Solanales</taxon>
        <taxon>Convolvulaceae</taxon>
        <taxon>Cuscuteae</taxon>
        <taxon>Cuscuta</taxon>
        <taxon>Cuscuta subgen. Grammica</taxon>
        <taxon>Cuscuta sect. Oxycarpae</taxon>
    </lineage>
</organism>
<feature type="chain" id="PRO_0000323360" description="Small ribosomal subunit protein uS11c">
    <location>
        <begin position="1"/>
        <end position="138"/>
    </location>
</feature>
<dbReference type="EMBL" id="AM711639">
    <property type="protein sequence ID" value="CAM98357.1"/>
    <property type="molecule type" value="Genomic_DNA"/>
</dbReference>
<dbReference type="RefSeq" id="YP_001430070.1">
    <property type="nucleotide sequence ID" value="NC_009765.1"/>
</dbReference>
<dbReference type="SMR" id="A7M929"/>
<dbReference type="GeneID" id="5536732"/>
<dbReference type="GO" id="GO:0009536">
    <property type="term" value="C:plastid"/>
    <property type="evidence" value="ECO:0007669"/>
    <property type="project" value="UniProtKB-SubCell"/>
</dbReference>
<dbReference type="GO" id="GO:1990904">
    <property type="term" value="C:ribonucleoprotein complex"/>
    <property type="evidence" value="ECO:0007669"/>
    <property type="project" value="UniProtKB-KW"/>
</dbReference>
<dbReference type="GO" id="GO:0005840">
    <property type="term" value="C:ribosome"/>
    <property type="evidence" value="ECO:0007669"/>
    <property type="project" value="UniProtKB-KW"/>
</dbReference>
<dbReference type="GO" id="GO:0019843">
    <property type="term" value="F:rRNA binding"/>
    <property type="evidence" value="ECO:0007669"/>
    <property type="project" value="UniProtKB-KW"/>
</dbReference>
<dbReference type="GO" id="GO:0003735">
    <property type="term" value="F:structural constituent of ribosome"/>
    <property type="evidence" value="ECO:0007669"/>
    <property type="project" value="InterPro"/>
</dbReference>
<dbReference type="GO" id="GO:0006412">
    <property type="term" value="P:translation"/>
    <property type="evidence" value="ECO:0007669"/>
    <property type="project" value="InterPro"/>
</dbReference>
<dbReference type="Gene3D" id="3.30.420.80">
    <property type="entry name" value="Ribosomal protein S11"/>
    <property type="match status" value="1"/>
</dbReference>
<dbReference type="HAMAP" id="MF_01310">
    <property type="entry name" value="Ribosomal_uS11"/>
    <property type="match status" value="1"/>
</dbReference>
<dbReference type="InterPro" id="IPR001971">
    <property type="entry name" value="Ribosomal_uS11"/>
</dbReference>
<dbReference type="InterPro" id="IPR019981">
    <property type="entry name" value="Ribosomal_uS11_bac-type"/>
</dbReference>
<dbReference type="InterPro" id="IPR018102">
    <property type="entry name" value="Ribosomal_uS11_CS"/>
</dbReference>
<dbReference type="InterPro" id="IPR036967">
    <property type="entry name" value="Ribosomal_uS11_sf"/>
</dbReference>
<dbReference type="NCBIfam" id="NF003698">
    <property type="entry name" value="PRK05309.1"/>
    <property type="match status" value="1"/>
</dbReference>
<dbReference type="NCBIfam" id="TIGR03632">
    <property type="entry name" value="uS11_bact"/>
    <property type="match status" value="1"/>
</dbReference>
<dbReference type="PANTHER" id="PTHR11759">
    <property type="entry name" value="40S RIBOSOMAL PROTEIN S14/30S RIBOSOMAL PROTEIN S11"/>
    <property type="match status" value="1"/>
</dbReference>
<dbReference type="Pfam" id="PF00411">
    <property type="entry name" value="Ribosomal_S11"/>
    <property type="match status" value="1"/>
</dbReference>
<dbReference type="PIRSF" id="PIRSF002131">
    <property type="entry name" value="Ribosomal_S11"/>
    <property type="match status" value="1"/>
</dbReference>
<dbReference type="SUPFAM" id="SSF53137">
    <property type="entry name" value="Translational machinery components"/>
    <property type="match status" value="1"/>
</dbReference>
<dbReference type="PROSITE" id="PS00054">
    <property type="entry name" value="RIBOSOMAL_S11"/>
    <property type="match status" value="1"/>
</dbReference>
<evidence type="ECO:0000255" key="1">
    <source>
        <dbReference type="HAMAP-Rule" id="MF_01310"/>
    </source>
</evidence>
<evidence type="ECO:0000305" key="2"/>
<gene>
    <name evidence="1" type="primary">rps11</name>
</gene>
<keyword id="KW-0934">Plastid</keyword>
<keyword id="KW-0687">Ribonucleoprotein</keyword>
<keyword id="KW-0689">Ribosomal protein</keyword>
<keyword id="KW-0694">RNA-binding</keyword>
<keyword id="KW-0699">rRNA-binding</keyword>
<name>RR11_CUSGR</name>